<protein>
    <recommendedName>
        <fullName evidence="1">Putative iron-sulfur cluster insertion protein ErpA</fullName>
    </recommendedName>
</protein>
<dbReference type="EMBL" id="BX571965">
    <property type="protein sequence ID" value="CAH36919.1"/>
    <property type="molecule type" value="Genomic_DNA"/>
</dbReference>
<dbReference type="RefSeq" id="WP_004194247.1">
    <property type="nucleotide sequence ID" value="NZ_CP009538.1"/>
</dbReference>
<dbReference type="RefSeq" id="YP_109503.1">
    <property type="nucleotide sequence ID" value="NC_006350.1"/>
</dbReference>
<dbReference type="SMR" id="Q63QW5"/>
<dbReference type="STRING" id="272560.BPSL2909"/>
<dbReference type="GeneID" id="93061505"/>
<dbReference type="KEGG" id="bps:BPSL2909"/>
<dbReference type="PATRIC" id="fig|272560.51.peg.2380"/>
<dbReference type="eggNOG" id="COG0316">
    <property type="taxonomic scope" value="Bacteria"/>
</dbReference>
<dbReference type="Proteomes" id="UP000000605">
    <property type="component" value="Chromosome 1"/>
</dbReference>
<dbReference type="GO" id="GO:0051537">
    <property type="term" value="F:2 iron, 2 sulfur cluster binding"/>
    <property type="evidence" value="ECO:0007669"/>
    <property type="project" value="TreeGrafter"/>
</dbReference>
<dbReference type="GO" id="GO:0051539">
    <property type="term" value="F:4 iron, 4 sulfur cluster binding"/>
    <property type="evidence" value="ECO:0007669"/>
    <property type="project" value="TreeGrafter"/>
</dbReference>
<dbReference type="GO" id="GO:0005506">
    <property type="term" value="F:iron ion binding"/>
    <property type="evidence" value="ECO:0007669"/>
    <property type="project" value="UniProtKB-UniRule"/>
</dbReference>
<dbReference type="GO" id="GO:0016226">
    <property type="term" value="P:iron-sulfur cluster assembly"/>
    <property type="evidence" value="ECO:0007669"/>
    <property type="project" value="UniProtKB-UniRule"/>
</dbReference>
<dbReference type="FunFam" id="2.60.300.12:FF:000002">
    <property type="entry name" value="Iron-sulfur cluster insertion protein ErpA"/>
    <property type="match status" value="1"/>
</dbReference>
<dbReference type="Gene3D" id="2.60.300.12">
    <property type="entry name" value="HesB-like domain"/>
    <property type="match status" value="1"/>
</dbReference>
<dbReference type="HAMAP" id="MF_01380">
    <property type="entry name" value="Fe_S_insert_ErpA"/>
    <property type="match status" value="1"/>
</dbReference>
<dbReference type="InterPro" id="IPR000361">
    <property type="entry name" value="FeS_biogenesis"/>
</dbReference>
<dbReference type="InterPro" id="IPR016092">
    <property type="entry name" value="FeS_cluster_insertion"/>
</dbReference>
<dbReference type="InterPro" id="IPR017870">
    <property type="entry name" value="FeS_cluster_insertion_CS"/>
</dbReference>
<dbReference type="InterPro" id="IPR023063">
    <property type="entry name" value="FeS_cluster_insertion_RrpA"/>
</dbReference>
<dbReference type="InterPro" id="IPR035903">
    <property type="entry name" value="HesB-like_dom_sf"/>
</dbReference>
<dbReference type="NCBIfam" id="TIGR00049">
    <property type="entry name" value="iron-sulfur cluster assembly accessory protein"/>
    <property type="match status" value="1"/>
</dbReference>
<dbReference type="NCBIfam" id="NF010147">
    <property type="entry name" value="PRK13623.1"/>
    <property type="match status" value="1"/>
</dbReference>
<dbReference type="PANTHER" id="PTHR43011">
    <property type="entry name" value="IRON-SULFUR CLUSTER ASSEMBLY 2 HOMOLOG, MITOCHONDRIAL"/>
    <property type="match status" value="1"/>
</dbReference>
<dbReference type="PANTHER" id="PTHR43011:SF1">
    <property type="entry name" value="IRON-SULFUR CLUSTER ASSEMBLY 2 HOMOLOG, MITOCHONDRIAL"/>
    <property type="match status" value="1"/>
</dbReference>
<dbReference type="Pfam" id="PF01521">
    <property type="entry name" value="Fe-S_biosyn"/>
    <property type="match status" value="1"/>
</dbReference>
<dbReference type="SUPFAM" id="SSF89360">
    <property type="entry name" value="HesB-like domain"/>
    <property type="match status" value="1"/>
</dbReference>
<dbReference type="PROSITE" id="PS01152">
    <property type="entry name" value="HESB"/>
    <property type="match status" value="1"/>
</dbReference>
<sequence>MNAVTESAATTEMPAPFVFTDAAADKVKQLIDEEGNPDLKLRVFVQGGGCSGFQYGFTFDEEVNEDDTVLNKNGVVLLVDAMSYQYLVGAEIDYKDDLNGAQFVIKNPNATTTCGCGSSFSV</sequence>
<evidence type="ECO:0000255" key="1">
    <source>
        <dbReference type="HAMAP-Rule" id="MF_01380"/>
    </source>
</evidence>
<name>ERPA_BURPS</name>
<keyword id="KW-0408">Iron</keyword>
<keyword id="KW-0411">Iron-sulfur</keyword>
<keyword id="KW-0479">Metal-binding</keyword>
<keyword id="KW-1185">Reference proteome</keyword>
<feature type="chain" id="PRO_0000311461" description="Putative iron-sulfur cluster insertion protein ErpA">
    <location>
        <begin position="1"/>
        <end position="122"/>
    </location>
</feature>
<feature type="binding site" evidence="1">
    <location>
        <position position="50"/>
    </location>
    <ligand>
        <name>iron-sulfur cluster</name>
        <dbReference type="ChEBI" id="CHEBI:30408"/>
    </ligand>
</feature>
<feature type="binding site" evidence="1">
    <location>
        <position position="114"/>
    </location>
    <ligand>
        <name>iron-sulfur cluster</name>
        <dbReference type="ChEBI" id="CHEBI:30408"/>
    </ligand>
</feature>
<feature type="binding site" evidence="1">
    <location>
        <position position="116"/>
    </location>
    <ligand>
        <name>iron-sulfur cluster</name>
        <dbReference type="ChEBI" id="CHEBI:30408"/>
    </ligand>
</feature>
<gene>
    <name evidence="1" type="primary">erpA</name>
    <name type="ordered locus">BPSL2909</name>
</gene>
<proteinExistence type="inferred from homology"/>
<organism>
    <name type="scientific">Burkholderia pseudomallei (strain K96243)</name>
    <dbReference type="NCBI Taxonomy" id="272560"/>
    <lineage>
        <taxon>Bacteria</taxon>
        <taxon>Pseudomonadati</taxon>
        <taxon>Pseudomonadota</taxon>
        <taxon>Betaproteobacteria</taxon>
        <taxon>Burkholderiales</taxon>
        <taxon>Burkholderiaceae</taxon>
        <taxon>Burkholderia</taxon>
        <taxon>pseudomallei group</taxon>
    </lineage>
</organism>
<reference key="1">
    <citation type="journal article" date="2004" name="Proc. Natl. Acad. Sci. U.S.A.">
        <title>Genomic plasticity of the causative agent of melioidosis, Burkholderia pseudomallei.</title>
        <authorList>
            <person name="Holden M.T.G."/>
            <person name="Titball R.W."/>
            <person name="Peacock S.J."/>
            <person name="Cerdeno-Tarraga A.-M."/>
            <person name="Atkins T."/>
            <person name="Crossman L.C."/>
            <person name="Pitt T."/>
            <person name="Churcher C."/>
            <person name="Mungall K.L."/>
            <person name="Bentley S.D."/>
            <person name="Sebaihia M."/>
            <person name="Thomson N.R."/>
            <person name="Bason N."/>
            <person name="Beacham I.R."/>
            <person name="Brooks K."/>
            <person name="Brown K.A."/>
            <person name="Brown N.F."/>
            <person name="Challis G.L."/>
            <person name="Cherevach I."/>
            <person name="Chillingworth T."/>
            <person name="Cronin A."/>
            <person name="Crossett B."/>
            <person name="Davis P."/>
            <person name="DeShazer D."/>
            <person name="Feltwell T."/>
            <person name="Fraser A."/>
            <person name="Hance Z."/>
            <person name="Hauser H."/>
            <person name="Holroyd S."/>
            <person name="Jagels K."/>
            <person name="Keith K.E."/>
            <person name="Maddison M."/>
            <person name="Moule S."/>
            <person name="Price C."/>
            <person name="Quail M.A."/>
            <person name="Rabbinowitsch E."/>
            <person name="Rutherford K."/>
            <person name="Sanders M."/>
            <person name="Simmonds M."/>
            <person name="Songsivilai S."/>
            <person name="Stevens K."/>
            <person name="Tumapa S."/>
            <person name="Vesaratchavest M."/>
            <person name="Whitehead S."/>
            <person name="Yeats C."/>
            <person name="Barrell B.G."/>
            <person name="Oyston P.C.F."/>
            <person name="Parkhill J."/>
        </authorList>
    </citation>
    <scope>NUCLEOTIDE SEQUENCE [LARGE SCALE GENOMIC DNA]</scope>
    <source>
        <strain>K96243</strain>
    </source>
</reference>
<comment type="function">
    <text evidence="1">Required for insertion of 4Fe-4S clusters.</text>
</comment>
<comment type="cofactor">
    <cofactor evidence="1">
        <name>iron-sulfur cluster</name>
        <dbReference type="ChEBI" id="CHEBI:30408"/>
    </cofactor>
    <text evidence="1">Binds 1 iron-sulfur cluster per subunit.</text>
</comment>
<comment type="subunit">
    <text evidence="1">Homodimer.</text>
</comment>
<comment type="similarity">
    <text evidence="1">Belongs to the HesB/IscA family.</text>
</comment>
<accession>Q63QW5</accession>